<evidence type="ECO:0000250" key="1"/>
<evidence type="ECO:0000250" key="2">
    <source>
        <dbReference type="UniProtKB" id="Q78XR0"/>
    </source>
</evidence>
<evidence type="ECO:0000269" key="3">
    <source>
    </source>
</evidence>
<evidence type="ECO:0000269" key="4">
    <source>
    </source>
</evidence>
<evidence type="ECO:0000269" key="5">
    <source>
    </source>
</evidence>
<evidence type="ECO:0000303" key="6">
    <source>
    </source>
</evidence>
<evidence type="ECO:0000303" key="7">
    <source>
    </source>
</evidence>
<evidence type="ECO:0000305" key="8"/>
<evidence type="ECO:0000312" key="9">
    <source>
        <dbReference type="HGNC" id="HGNC:23069"/>
    </source>
</evidence>
<evidence type="ECO:0007829" key="10">
    <source>
        <dbReference type="PDB" id="2C0J"/>
    </source>
</evidence>
<evidence type="ECO:0007829" key="11">
    <source>
        <dbReference type="PDB" id="2J3T"/>
    </source>
</evidence>
<reference key="1">
    <citation type="submission" date="1999-05" db="EMBL/GenBank/DDBJ databases">
        <title>Human partial CDS from CD34+ stem cells.</title>
        <authorList>
            <person name="Ye M."/>
            <person name="Zhang Q.-H."/>
            <person name="Zhou J."/>
            <person name="Shen Y."/>
            <person name="Wu X.-Y."/>
            <person name="Guan Z.Q."/>
            <person name="Wang L."/>
            <person name="Fan H.-Y."/>
            <person name="Mao Y.-F."/>
            <person name="Dai M."/>
            <person name="Huang Q.-H."/>
            <person name="Chen S.-J."/>
            <person name="Chen Z."/>
        </authorList>
    </citation>
    <scope>NUCLEOTIDE SEQUENCE [LARGE SCALE MRNA] (ISOFORM 1)</scope>
    <source>
        <tissue>Umbilical cord blood</tissue>
    </source>
</reference>
<reference key="2">
    <citation type="journal article" date="2004" name="Nature">
        <title>The DNA sequence and biology of human chromosome 19.</title>
        <authorList>
            <person name="Grimwood J."/>
            <person name="Gordon L.A."/>
            <person name="Olsen A.S."/>
            <person name="Terry A."/>
            <person name="Schmutz J."/>
            <person name="Lamerdin J.E."/>
            <person name="Hellsten U."/>
            <person name="Goodstein D."/>
            <person name="Couronne O."/>
            <person name="Tran-Gyamfi M."/>
            <person name="Aerts A."/>
            <person name="Altherr M."/>
            <person name="Ashworth L."/>
            <person name="Bajorek E."/>
            <person name="Black S."/>
            <person name="Branscomb E."/>
            <person name="Caenepeel S."/>
            <person name="Carrano A.V."/>
            <person name="Caoile C."/>
            <person name="Chan Y.M."/>
            <person name="Christensen M."/>
            <person name="Cleland C.A."/>
            <person name="Copeland A."/>
            <person name="Dalin E."/>
            <person name="Dehal P."/>
            <person name="Denys M."/>
            <person name="Detter J.C."/>
            <person name="Escobar J."/>
            <person name="Flowers D."/>
            <person name="Fotopulos D."/>
            <person name="Garcia C."/>
            <person name="Georgescu A.M."/>
            <person name="Glavina T."/>
            <person name="Gomez M."/>
            <person name="Gonzales E."/>
            <person name="Groza M."/>
            <person name="Hammon N."/>
            <person name="Hawkins T."/>
            <person name="Haydu L."/>
            <person name="Ho I."/>
            <person name="Huang W."/>
            <person name="Israni S."/>
            <person name="Jett J."/>
            <person name="Kadner K."/>
            <person name="Kimball H."/>
            <person name="Kobayashi A."/>
            <person name="Larionov V."/>
            <person name="Leem S.-H."/>
            <person name="Lopez F."/>
            <person name="Lou Y."/>
            <person name="Lowry S."/>
            <person name="Malfatti S."/>
            <person name="Martinez D."/>
            <person name="McCready P.M."/>
            <person name="Medina C."/>
            <person name="Morgan J."/>
            <person name="Nelson K."/>
            <person name="Nolan M."/>
            <person name="Ovcharenko I."/>
            <person name="Pitluck S."/>
            <person name="Pollard M."/>
            <person name="Popkie A.P."/>
            <person name="Predki P."/>
            <person name="Quan G."/>
            <person name="Ramirez L."/>
            <person name="Rash S."/>
            <person name="Retterer J."/>
            <person name="Rodriguez A."/>
            <person name="Rogers S."/>
            <person name="Salamov A."/>
            <person name="Salazar A."/>
            <person name="She X."/>
            <person name="Smith D."/>
            <person name="Slezak T."/>
            <person name="Solovyev V."/>
            <person name="Thayer N."/>
            <person name="Tice H."/>
            <person name="Tsai M."/>
            <person name="Ustaszewska A."/>
            <person name="Vo N."/>
            <person name="Wagner M."/>
            <person name="Wheeler J."/>
            <person name="Wu K."/>
            <person name="Xie G."/>
            <person name="Yang J."/>
            <person name="Dubchak I."/>
            <person name="Furey T.S."/>
            <person name="DeJong P."/>
            <person name="Dickson M."/>
            <person name="Gordon D."/>
            <person name="Eichler E.E."/>
            <person name="Pennacchio L.A."/>
            <person name="Richardson P."/>
            <person name="Stubbs L."/>
            <person name="Rokhsar D.S."/>
            <person name="Myers R.M."/>
            <person name="Rubin E.M."/>
            <person name="Lucas S.M."/>
        </authorList>
    </citation>
    <scope>NUCLEOTIDE SEQUENCE [LARGE SCALE GENOMIC DNA]</scope>
</reference>
<reference key="3">
    <citation type="journal article" date="2004" name="Genome Res.">
        <title>The status, quality, and expansion of the NIH full-length cDNA project: the Mammalian Gene Collection (MGC).</title>
        <authorList>
            <consortium name="The MGC Project Team"/>
        </authorList>
    </citation>
    <scope>NUCLEOTIDE SEQUENCE [LARGE SCALE MRNA] (ISOFORM 2)</scope>
    <source>
        <tissue>Lung</tissue>
    </source>
</reference>
<reference key="4">
    <citation type="journal article" date="2006" name="J. Mol. Biol.">
        <title>Structure of the Bet3-Tpc6B core of TRAPP: two Tpc6 paralogs form trimeric complexes with Bet3 and Mum2.</title>
        <authorList>
            <person name="Kummel D."/>
            <person name="Muller J.J."/>
            <person name="Roske Y."/>
            <person name="Henke N."/>
            <person name="Heinemann U."/>
        </authorList>
    </citation>
    <scope>SUBUNIT</scope>
    <scope>INTERACTION WITH TRAPPC3</scope>
</reference>
<reference key="5">
    <citation type="journal article" date="2009" name="Traffic">
        <title>TRAPPC2L is a novel, highly conserved TRAPP-interacting protein.</title>
        <authorList>
            <person name="Scrivens P.J."/>
            <person name="Shahrzad N."/>
            <person name="Moores A."/>
            <person name="Morin A."/>
            <person name="Brunet S."/>
            <person name="Sacher M."/>
        </authorList>
    </citation>
    <scope>IDENTIFICATION IN TRAPP COMPLEX</scope>
    <scope>INTERACTION WITH TRAPPC2L</scope>
</reference>
<reference key="6">
    <citation type="journal article" date="2005" name="Traffic">
        <title>Biochemical and crystallographic studies reveal a specific interaction between TRAPP subunits Trs33p and Bet3p.</title>
        <authorList>
            <person name="Kim M.-S."/>
            <person name="Yi M.-J."/>
            <person name="Lee K.-H."/>
            <person name="Wagner J."/>
            <person name="Munger C."/>
            <person name="Kim Y.-G."/>
            <person name="Whiteway M."/>
            <person name="Cygler M."/>
            <person name="Oh B.-H."/>
            <person name="Sacher M."/>
        </authorList>
    </citation>
    <scope>X-RAY CRYSTALLOGRAPHY (2.2 ANGSTROMS) IN COMPLEX WITH TRAPPC3</scope>
</reference>
<feature type="chain" id="PRO_0000244539" description="Trafficking protein particle complex subunit 6A">
    <location>
        <begin position="1"/>
        <end position="159"/>
    </location>
</feature>
<feature type="modified residue" description="Phosphoserine" evidence="2">
    <location>
        <position position="33"/>
    </location>
</feature>
<feature type="splice variant" id="VSP_019585" description="In isoform 2." evidence="6">
    <original>G</original>
    <variation>GVSAGLRGEEAGATK</variation>
    <location>
        <position position="28"/>
    </location>
</feature>
<feature type="splice variant" id="VSP_047016" description="In isoform 3." evidence="8">
    <original>GQKMSLSVLEGMGFRVGQALGERLPRETLAFREELDVLKFLCKDLWVAVFQKQMDSLRTNHQGTYVLQDNSFPLLLPMASGLQYLEEAPKFLAFTCGLLRGALYTLGIESVVTASVAALPVCKFQVVIPKS</original>
    <variation>AAPGDAGLQGGAGCPQVLVQRPVGGGVPEADGQPAHQSPGDLRPARQQLPPPPPDGLWPAVSGGSTQVPGLHLRPPARRPLYPGH</variation>
    <location>
        <begin position="29"/>
        <end position="159"/>
    </location>
</feature>
<feature type="splice variant" id="VSP_047017" description="In isoform 4." evidence="8">
    <original>GQKMSLSVLEGMGFRVGQALGERLPRETLAFREELDVLKFLCKDLWVAVFQKQMDSLRTNHQGTYVLQDNSFPLLLPMASGLQYLEEAPKFLAFTCGLLRGALYTLGIESVVTASVAALPVCKFQVVIPKS</original>
    <variation>VSAGLRGEEAGATKAAPGDAGLQGGAGCPQVLVQRPVGGGVPEADGQPAHQSPGDLRPARQQLPPPPPDGLWPAVSGGSTQVPGLHLRPPARRPLYPGH</variation>
    <location>
        <begin position="29"/>
        <end position="159"/>
    </location>
</feature>
<feature type="sequence conflict" description="In Ref. 1; AAF28967." evidence="8" ref="1">
    <original>SFPLLLPMASGLQYLEEAPKFLAFT</original>
    <variation>KLSPPPPDGLWPAVSGGSTQVPGLH</variation>
    <location>
        <begin position="99"/>
        <end position="123"/>
    </location>
</feature>
<feature type="helix" evidence="10">
    <location>
        <begin position="4"/>
        <end position="17"/>
    </location>
</feature>
<feature type="helix" evidence="11">
    <location>
        <begin position="27"/>
        <end position="29"/>
    </location>
</feature>
<feature type="helix" evidence="10">
    <location>
        <begin position="32"/>
        <end position="51"/>
    </location>
</feature>
<feature type="helix" evidence="10">
    <location>
        <begin position="54"/>
        <end position="57"/>
    </location>
</feature>
<feature type="helix" evidence="10">
    <location>
        <begin position="62"/>
        <end position="70"/>
    </location>
</feature>
<feature type="helix" evidence="10">
    <location>
        <begin position="72"/>
        <end position="78"/>
    </location>
</feature>
<feature type="strand" evidence="10">
    <location>
        <begin position="83"/>
        <end position="87"/>
    </location>
</feature>
<feature type="strand" evidence="10">
    <location>
        <begin position="89"/>
        <end position="97"/>
    </location>
</feature>
<feature type="helix" evidence="10">
    <location>
        <begin position="101"/>
        <end position="103"/>
    </location>
</feature>
<feature type="helix" evidence="10">
    <location>
        <begin position="110"/>
        <end position="112"/>
    </location>
</feature>
<feature type="turn" evidence="10">
    <location>
        <begin position="113"/>
        <end position="115"/>
    </location>
</feature>
<feature type="helix" evidence="10">
    <location>
        <begin position="116"/>
        <end position="119"/>
    </location>
</feature>
<feature type="helix" evidence="10">
    <location>
        <begin position="121"/>
        <end position="133"/>
    </location>
</feature>
<feature type="strand" evidence="10">
    <location>
        <begin position="139"/>
        <end position="146"/>
    </location>
</feature>
<feature type="strand" evidence="10">
    <location>
        <begin position="150"/>
        <end position="155"/>
    </location>
</feature>
<sequence>MADTVLFEFLHTEMVAELWAHDPDPGPGGQKMSLSVLEGMGFRVGQALGERLPRETLAFREELDVLKFLCKDLWVAVFQKQMDSLRTNHQGTYVLQDNSFPLLLPMASGLQYLEEAPKFLAFTCGLLRGALYTLGIESVVTASVAALPVCKFQVVIPKS</sequence>
<name>TPC6A_HUMAN</name>
<proteinExistence type="evidence at protein level"/>
<dbReference type="EMBL" id="AF161407">
    <property type="protein sequence ID" value="AAF28967.1"/>
    <property type="status" value="ALT_INIT"/>
    <property type="molecule type" value="mRNA"/>
</dbReference>
<dbReference type="EMBL" id="AC005757">
    <property type="protein sequence ID" value="AAC62259.1"/>
    <property type="status" value="ALT_INIT"/>
    <property type="molecule type" value="Genomic_DNA"/>
</dbReference>
<dbReference type="EMBL" id="BC001907">
    <property type="protein sequence ID" value="AAH01907.1"/>
    <property type="molecule type" value="mRNA"/>
</dbReference>
<dbReference type="EMBL" id="BC004450">
    <property type="protein sequence ID" value="AAH04450.1"/>
    <property type="molecule type" value="mRNA"/>
</dbReference>
<dbReference type="CCDS" id="CCDS12655.1">
    <molecule id="O75865-2"/>
</dbReference>
<dbReference type="CCDS" id="CCDS59395.1">
    <molecule id="O75865-4"/>
</dbReference>
<dbReference type="CCDS" id="CCDS59396.1">
    <molecule id="O75865-3"/>
</dbReference>
<dbReference type="CCDS" id="CCDS59397.1">
    <molecule id="O75865-1"/>
</dbReference>
<dbReference type="RefSeq" id="NP_001257820.1">
    <molecule id="O75865-1"/>
    <property type="nucleotide sequence ID" value="NM_001270891.2"/>
</dbReference>
<dbReference type="RefSeq" id="NP_001257821.1">
    <molecule id="O75865-4"/>
    <property type="nucleotide sequence ID" value="NM_001270892.2"/>
</dbReference>
<dbReference type="RefSeq" id="NP_001257822.1">
    <molecule id="O75865-3"/>
    <property type="nucleotide sequence ID" value="NM_001270893.2"/>
</dbReference>
<dbReference type="RefSeq" id="NP_077013.1">
    <molecule id="O75865-2"/>
    <property type="nucleotide sequence ID" value="NM_024108.3"/>
</dbReference>
<dbReference type="RefSeq" id="XP_047295375.1">
    <molecule id="O75865-4"/>
    <property type="nucleotide sequence ID" value="XM_047439419.1"/>
</dbReference>
<dbReference type="RefSeq" id="XP_047295376.1">
    <molecule id="O75865-3"/>
    <property type="nucleotide sequence ID" value="XM_047439420.1"/>
</dbReference>
<dbReference type="RefSeq" id="XP_054178090.1">
    <molecule id="O75865-4"/>
    <property type="nucleotide sequence ID" value="XM_054322115.1"/>
</dbReference>
<dbReference type="RefSeq" id="XP_054178091.1">
    <molecule id="O75865-3"/>
    <property type="nucleotide sequence ID" value="XM_054322116.1"/>
</dbReference>
<dbReference type="PDB" id="2C0J">
    <property type="method" value="X-ray"/>
    <property type="resolution" value="2.20 A"/>
    <property type="chains" value="B=1-159"/>
</dbReference>
<dbReference type="PDB" id="2J3T">
    <property type="method" value="X-ray"/>
    <property type="resolution" value="2.40 A"/>
    <property type="chains" value="B=1-159"/>
</dbReference>
<dbReference type="PDBsum" id="2C0J"/>
<dbReference type="PDBsum" id="2J3T"/>
<dbReference type="SMR" id="O75865"/>
<dbReference type="BioGRID" id="122538">
    <property type="interactions" value="58"/>
</dbReference>
<dbReference type="ComplexPortal" id="CPX-4750">
    <property type="entry name" value="TRAPP III complex, TRAPPC2 variant"/>
</dbReference>
<dbReference type="ComplexPortal" id="CPX-6903">
    <property type="entry name" value="TRAPP III complex, TRAPPC2B variant"/>
</dbReference>
<dbReference type="CORUM" id="O75865"/>
<dbReference type="DIP" id="DIP-37869N"/>
<dbReference type="FunCoup" id="O75865">
    <property type="interactions" value="305"/>
</dbReference>
<dbReference type="IntAct" id="O75865">
    <property type="interactions" value="53"/>
</dbReference>
<dbReference type="MINT" id="O75865"/>
<dbReference type="STRING" id="9606.ENSP00000006275"/>
<dbReference type="DrugBank" id="DB08342">
    <property type="generic name" value="S-palmitoyl-L-cysteine"/>
</dbReference>
<dbReference type="iPTMnet" id="O75865"/>
<dbReference type="PhosphoSitePlus" id="O75865"/>
<dbReference type="BioMuta" id="TRAPPC6A"/>
<dbReference type="jPOST" id="O75865"/>
<dbReference type="MassIVE" id="O75865"/>
<dbReference type="PaxDb" id="9606-ENSP00000006275"/>
<dbReference type="PeptideAtlas" id="O75865"/>
<dbReference type="ProteomicsDB" id="50231">
    <molecule id="O75865-1"/>
</dbReference>
<dbReference type="ProteomicsDB" id="50232">
    <molecule id="O75865-2"/>
</dbReference>
<dbReference type="Pumba" id="O75865"/>
<dbReference type="Antibodypedia" id="49152">
    <property type="antibodies" value="131 antibodies from 26 providers"/>
</dbReference>
<dbReference type="DNASU" id="79090"/>
<dbReference type="Ensembl" id="ENST00000006275.8">
    <molecule id="O75865-2"/>
    <property type="protein sequence ID" value="ENSP00000006275.3"/>
    <property type="gene ID" value="ENSG00000007255.10"/>
</dbReference>
<dbReference type="Ensembl" id="ENST00000585934.1">
    <molecule id="O75865-1"/>
    <property type="protein sequence ID" value="ENSP00000468612.1"/>
    <property type="gene ID" value="ENSG00000007255.10"/>
</dbReference>
<dbReference type="Ensembl" id="ENST00000588062.5">
    <molecule id="O75865-3"/>
    <property type="protein sequence ID" value="ENSP00000468363.1"/>
    <property type="gene ID" value="ENSG00000007255.10"/>
</dbReference>
<dbReference type="Ensembl" id="ENST00000592647.1">
    <molecule id="O75865-4"/>
    <property type="protein sequence ID" value="ENSP00000468182.1"/>
    <property type="gene ID" value="ENSG00000007255.10"/>
</dbReference>
<dbReference type="GeneID" id="79090"/>
<dbReference type="KEGG" id="hsa:79090"/>
<dbReference type="MANE-Select" id="ENST00000585934.1">
    <property type="protein sequence ID" value="ENSP00000468612.1"/>
    <property type="RefSeq nucleotide sequence ID" value="NM_001270891.2"/>
    <property type="RefSeq protein sequence ID" value="NP_001257820.1"/>
</dbReference>
<dbReference type="UCSC" id="uc002pav.5">
    <molecule id="O75865-1"/>
    <property type="organism name" value="human"/>
</dbReference>
<dbReference type="AGR" id="HGNC:23069"/>
<dbReference type="CTD" id="79090"/>
<dbReference type="DisGeNET" id="79090"/>
<dbReference type="GeneCards" id="TRAPPC6A"/>
<dbReference type="HGNC" id="HGNC:23069">
    <property type="gene designation" value="TRAPPC6A"/>
</dbReference>
<dbReference type="HPA" id="ENSG00000007255">
    <property type="expression patterns" value="Low tissue specificity"/>
</dbReference>
<dbReference type="MalaCards" id="TRAPPC6A"/>
<dbReference type="MIM" id="610396">
    <property type="type" value="gene"/>
</dbReference>
<dbReference type="neXtProt" id="NX_O75865"/>
<dbReference type="OpenTargets" id="ENSG00000007255"/>
<dbReference type="PharmGKB" id="PA134963625"/>
<dbReference type="VEuPathDB" id="HostDB:ENSG00000007255"/>
<dbReference type="eggNOG" id="KOG3316">
    <property type="taxonomic scope" value="Eukaryota"/>
</dbReference>
<dbReference type="GeneTree" id="ENSGT00390000012948"/>
<dbReference type="HOGENOM" id="CLU_076409_3_1_1"/>
<dbReference type="InParanoid" id="O75865"/>
<dbReference type="OMA" id="PACELHY"/>
<dbReference type="OrthoDB" id="941624at2759"/>
<dbReference type="PAN-GO" id="O75865">
    <property type="GO annotations" value="5 GO annotations based on evolutionary models"/>
</dbReference>
<dbReference type="PhylomeDB" id="O75865"/>
<dbReference type="TreeFam" id="TF313010"/>
<dbReference type="PathwayCommons" id="O75865"/>
<dbReference type="Reactome" id="R-HSA-204005">
    <property type="pathway name" value="COPII-mediated vesicle transport"/>
</dbReference>
<dbReference type="Reactome" id="R-HSA-8876198">
    <property type="pathway name" value="RAB GEFs exchange GTP for GDP on RABs"/>
</dbReference>
<dbReference type="SignaLink" id="O75865"/>
<dbReference type="BioGRID-ORCS" id="79090">
    <property type="hits" value="15 hits in 1152 CRISPR screens"/>
</dbReference>
<dbReference type="ChiTaRS" id="TRAPPC6A">
    <property type="organism name" value="human"/>
</dbReference>
<dbReference type="EvolutionaryTrace" id="O75865"/>
<dbReference type="GenomeRNAi" id="79090"/>
<dbReference type="Pharos" id="O75865">
    <property type="development level" value="Tbio"/>
</dbReference>
<dbReference type="PRO" id="PR:O75865"/>
<dbReference type="Proteomes" id="UP000005640">
    <property type="component" value="Chromosome 19"/>
</dbReference>
<dbReference type="RNAct" id="O75865">
    <property type="molecule type" value="protein"/>
</dbReference>
<dbReference type="Bgee" id="ENSG00000007255">
    <property type="expression patterns" value="Expressed in right uterine tube and 184 other cell types or tissues"/>
</dbReference>
<dbReference type="ExpressionAtlas" id="O75865">
    <property type="expression patterns" value="baseline and differential"/>
</dbReference>
<dbReference type="GO" id="GO:0005801">
    <property type="term" value="C:cis-Golgi network"/>
    <property type="evidence" value="ECO:0000318"/>
    <property type="project" value="GO_Central"/>
</dbReference>
<dbReference type="GO" id="GO:0005737">
    <property type="term" value="C:cytoplasm"/>
    <property type="evidence" value="ECO:0000303"/>
    <property type="project" value="ComplexPortal"/>
</dbReference>
<dbReference type="GO" id="GO:0005829">
    <property type="term" value="C:cytosol"/>
    <property type="evidence" value="ECO:0000304"/>
    <property type="project" value="Reactome"/>
</dbReference>
<dbReference type="GO" id="GO:0005783">
    <property type="term" value="C:endoplasmic reticulum"/>
    <property type="evidence" value="ECO:0007669"/>
    <property type="project" value="UniProtKB-SubCell"/>
</dbReference>
<dbReference type="GO" id="GO:0005802">
    <property type="term" value="C:trans-Golgi network"/>
    <property type="evidence" value="ECO:0000318"/>
    <property type="project" value="GO_Central"/>
</dbReference>
<dbReference type="GO" id="GO:0030008">
    <property type="term" value="C:TRAPP complex"/>
    <property type="evidence" value="ECO:0000318"/>
    <property type="project" value="GO_Central"/>
</dbReference>
<dbReference type="GO" id="GO:1990072">
    <property type="term" value="C:TRAPPIII protein complex"/>
    <property type="evidence" value="ECO:0000303"/>
    <property type="project" value="ComplexPortal"/>
</dbReference>
<dbReference type="GO" id="GO:0048208">
    <property type="term" value="P:COPII vesicle coating"/>
    <property type="evidence" value="ECO:0000303"/>
    <property type="project" value="ComplexPortal"/>
</dbReference>
<dbReference type="GO" id="GO:0006888">
    <property type="term" value="P:endoplasmic reticulum to Golgi vesicle-mediated transport"/>
    <property type="evidence" value="ECO:0000318"/>
    <property type="project" value="GO_Central"/>
</dbReference>
<dbReference type="GO" id="GO:0099022">
    <property type="term" value="P:vesicle tethering"/>
    <property type="evidence" value="ECO:0000303"/>
    <property type="project" value="ComplexPortal"/>
</dbReference>
<dbReference type="CDD" id="cd14944">
    <property type="entry name" value="TRAPPC6A_Trs33"/>
    <property type="match status" value="1"/>
</dbReference>
<dbReference type="FunFam" id="3.30.1380.20:FF:000009">
    <property type="entry name" value="Trafficking protein particle complex subunit 6A"/>
    <property type="match status" value="1"/>
</dbReference>
<dbReference type="Gene3D" id="3.30.1380.20">
    <property type="entry name" value="Trafficking protein particle complex subunit 3"/>
    <property type="match status" value="1"/>
</dbReference>
<dbReference type="InterPro" id="IPR024096">
    <property type="entry name" value="NO_sig/Golgi_transp_ligand-bd"/>
</dbReference>
<dbReference type="InterPro" id="IPR007194">
    <property type="entry name" value="TRAPP_component"/>
</dbReference>
<dbReference type="InterPro" id="IPR037992">
    <property type="entry name" value="TRAPPC6/Trs33"/>
</dbReference>
<dbReference type="PANTHER" id="PTHR12817:SF2">
    <property type="entry name" value="TRAFFICKING PROTEIN PARTICLE COMPLEX SUBUNIT 6A"/>
    <property type="match status" value="1"/>
</dbReference>
<dbReference type="PANTHER" id="PTHR12817">
    <property type="entry name" value="TRAFFICKING PROTEIN PARTICLE COMPLEX SUBUNIT 6B"/>
    <property type="match status" value="1"/>
</dbReference>
<dbReference type="Pfam" id="PF04051">
    <property type="entry name" value="TRAPP"/>
    <property type="match status" value="1"/>
</dbReference>
<dbReference type="SUPFAM" id="SSF111126">
    <property type="entry name" value="Ligand-binding domain in the NO signalling and Golgi transport"/>
    <property type="match status" value="1"/>
</dbReference>
<comment type="function">
    <text evidence="2">May play a role in vesicular transport during the biogenesis of melanosomes.</text>
</comment>
<comment type="subunit">
    <text evidence="3 4 5">Part of the multisubunit transport protein particle (TRAPP) complex. Heterodimer with TRAPPC3 (PubMed:16262728, PubMed:16828797). The heterodimer TRAPPC3-TRAPPC6A interacts with TRAPPC2L. Interacts with TRAPPC2L (PubMed:19416478).</text>
</comment>
<comment type="interaction">
    <interactant intactId="EBI-743573">
        <id>O75865</id>
    </interactant>
    <interactant intactId="EBI-10178933">
        <id>V9HW27</id>
        <label>HEL-S-101</label>
    </interactant>
    <organismsDiffer>false</organismsDiffer>
    <experiments>3</experiments>
</comment>
<comment type="interaction">
    <interactant intactId="EBI-743573">
        <id>O75865</id>
    </interactant>
    <interactant intactId="EBI-747204">
        <id>Q9UKT9</id>
        <label>IKZF3</label>
    </interactant>
    <organismsDiffer>false</organismsDiffer>
    <experiments>3</experiments>
</comment>
<comment type="interaction">
    <interactant intactId="EBI-743573">
        <id>O75865</id>
    </interactant>
    <interactant intactId="EBI-747844">
        <id>Q96QF0</id>
        <label>RAB3IP</label>
    </interactant>
    <organismsDiffer>false</organismsDiffer>
    <experiments>4</experiments>
</comment>
<comment type="interaction">
    <interactant intactId="EBI-743573">
        <id>O75865</id>
    </interactant>
    <interactant intactId="EBI-743566">
        <id>O43617</id>
        <label>TRAPPC3</label>
    </interactant>
    <organismsDiffer>false</organismsDiffer>
    <experiments>9</experiments>
</comment>
<comment type="interaction">
    <interactant intactId="EBI-743573">
        <id>O75865</id>
    </interactant>
    <interactant intactId="EBI-10182121">
        <id>Q8NF64-2</id>
        <label>ZMIZ2</label>
    </interactant>
    <organismsDiffer>false</organismsDiffer>
    <experiments>3</experiments>
</comment>
<comment type="interaction">
    <interactant intactId="EBI-743573">
        <id>O75865</id>
    </interactant>
    <interactant intactId="EBI-3957603">
        <id>P09022</id>
        <label>Hoxa1</label>
    </interactant>
    <organismsDiffer>true</organismsDiffer>
    <experiments>3</experiments>
</comment>
<comment type="interaction">
    <interactant intactId="EBI-8451480">
        <id>O75865-2</id>
    </interactant>
    <interactant intactId="EBI-2949658">
        <id>O95429</id>
        <label>BAG4</label>
    </interactant>
    <organismsDiffer>false</organismsDiffer>
    <experiments>3</experiments>
</comment>
<comment type="interaction">
    <interactant intactId="EBI-8451480">
        <id>O75865-2</id>
    </interactant>
    <interactant intactId="EBI-742141">
        <id>O95810</id>
        <label>CAVIN2</label>
    </interactant>
    <organismsDiffer>false</organismsDiffer>
    <experiments>3</experiments>
</comment>
<comment type="interaction">
    <interactant intactId="EBI-8451480">
        <id>O75865-2</id>
    </interactant>
    <interactant intactId="EBI-768015">
        <id>O95400</id>
        <label>CD2BP2</label>
    </interactant>
    <organismsDiffer>false</organismsDiffer>
    <experiments>3</experiments>
</comment>
<comment type="interaction">
    <interactant intactId="EBI-8451480">
        <id>O75865-2</id>
    </interactant>
    <interactant intactId="EBI-751587">
        <id>Q9GZU7</id>
        <label>CTDSP1</label>
    </interactant>
    <organismsDiffer>false</organismsDiffer>
    <experiments>3</experiments>
</comment>
<comment type="interaction">
    <interactant intactId="EBI-8451480">
        <id>O75865-2</id>
    </interactant>
    <interactant intactId="EBI-11525448">
        <id>O43281-2</id>
        <label>EFS</label>
    </interactant>
    <organismsDiffer>false</organismsDiffer>
    <experiments>3</experiments>
</comment>
<comment type="interaction">
    <interactant intactId="EBI-8451480">
        <id>O75865-2</id>
    </interactant>
    <interactant intactId="EBI-12807776">
        <id>O00167-2</id>
        <label>EYA2</label>
    </interactant>
    <organismsDiffer>false</organismsDiffer>
    <experiments>3</experiments>
</comment>
<comment type="interaction">
    <interactant intactId="EBI-8451480">
        <id>O75865-2</id>
    </interactant>
    <interactant intactId="EBI-11319000">
        <id>O15353</id>
        <label>FOXN1</label>
    </interactant>
    <organismsDiffer>false</organismsDiffer>
    <experiments>3</experiments>
</comment>
<comment type="interaction">
    <interactant intactId="EBI-8451480">
        <id>O75865-2</id>
    </interactant>
    <interactant intactId="EBI-12075758">
        <id>Q9NZ52-2</id>
        <label>GGA3</label>
    </interactant>
    <organismsDiffer>false</organismsDiffer>
    <experiments>3</experiments>
</comment>
<comment type="interaction">
    <interactant intactId="EBI-8451480">
        <id>O75865-2</id>
    </interactant>
    <interactant intactId="EBI-2857315">
        <id>Q9BRX5</id>
        <label>GINS3</label>
    </interactant>
    <organismsDiffer>false</organismsDiffer>
    <experiments>3</experiments>
</comment>
<comment type="interaction">
    <interactant intactId="EBI-8451480">
        <id>O75865-2</id>
    </interactant>
    <interactant intactId="EBI-11163335">
        <id>Q9NYA3</id>
        <label>GOLGA6A</label>
    </interactant>
    <organismsDiffer>false</organismsDiffer>
    <experiments>3</experiments>
</comment>
<comment type="interaction">
    <interactant intactId="EBI-8451480">
        <id>O75865-2</id>
    </interactant>
    <interactant intactId="EBI-739467">
        <id>Q9H8Y8</id>
        <label>GORASP2</label>
    </interactant>
    <organismsDiffer>false</organismsDiffer>
    <experiments>5</experiments>
</comment>
<comment type="interaction">
    <interactant intactId="EBI-8451480">
        <id>O75865-2</id>
    </interactant>
    <interactant intactId="EBI-739074">
        <id>Q9UJY1</id>
        <label>HSPB8</label>
    </interactant>
    <organismsDiffer>false</organismsDiffer>
    <experiments>3</experiments>
</comment>
<comment type="interaction">
    <interactant intactId="EBI-8451480">
        <id>O75865-2</id>
    </interactant>
    <interactant intactId="EBI-747204">
        <id>Q9UKT9</id>
        <label>IKZF3</label>
    </interactant>
    <organismsDiffer>false</organismsDiffer>
    <experiments>5</experiments>
</comment>
<comment type="interaction">
    <interactant intactId="EBI-8451480">
        <id>O75865-2</id>
    </interactant>
    <interactant intactId="EBI-6509505">
        <id>Q0VD86</id>
        <label>INCA1</label>
    </interactant>
    <organismsDiffer>false</organismsDiffer>
    <experiments>3</experiments>
</comment>
<comment type="interaction">
    <interactant intactId="EBI-8451480">
        <id>O75865-2</id>
    </interactant>
    <interactant intactId="EBI-9355810">
        <id>Q5T7N3</id>
        <label>KANK4</label>
    </interactant>
    <organismsDiffer>false</organismsDiffer>
    <experiments>3</experiments>
</comment>
<comment type="interaction">
    <interactant intactId="EBI-8451480">
        <id>O75865-2</id>
    </interactant>
    <interactant intactId="EBI-11953846">
        <id>Q52LG2</id>
        <label>KRTAP13-2</label>
    </interactant>
    <organismsDiffer>false</organismsDiffer>
    <experiments>3</experiments>
</comment>
<comment type="interaction">
    <interactant intactId="EBI-8451480">
        <id>O75865-2</id>
    </interactant>
    <interactant intactId="EBI-2865388">
        <id>Q969G2</id>
        <label>LHX4</label>
    </interactant>
    <organismsDiffer>false</organismsDiffer>
    <experiments>3</experiments>
</comment>
<comment type="interaction">
    <interactant intactId="EBI-8451480">
        <id>O75865-2</id>
    </interactant>
    <interactant intactId="EBI-5662487">
        <id>Q8TDC0</id>
        <label>MYOZ3</label>
    </interactant>
    <organismsDiffer>false</organismsDiffer>
    <experiments>3</experiments>
</comment>
<comment type="interaction">
    <interactant intactId="EBI-8451480">
        <id>O75865-2</id>
    </interactant>
    <interactant intactId="EBI-747278">
        <id>P26367</id>
        <label>PAX6</label>
    </interactant>
    <organismsDiffer>false</organismsDiffer>
    <experiments>3</experiments>
</comment>
<comment type="interaction">
    <interactant intactId="EBI-8451480">
        <id>O75865-2</id>
    </interactant>
    <interactant intactId="EBI-357275">
        <id>Q99471</id>
        <label>PFDN5</label>
    </interactant>
    <organismsDiffer>false</organismsDiffer>
    <experiments>3</experiments>
</comment>
<comment type="interaction">
    <interactant intactId="EBI-8451480">
        <id>O75865-2</id>
    </interactant>
    <interactant intactId="EBI-11984839">
        <id>Q96QF0-7</id>
        <label>RAB3IP</label>
    </interactant>
    <organismsDiffer>false</organismsDiffer>
    <experiments>3</experiments>
</comment>
<comment type="interaction">
    <interactant intactId="EBI-8451480">
        <id>O75865-2</id>
    </interactant>
    <interactant intactId="EBI-10829018">
        <id>Q04864-2</id>
        <label>REL</label>
    </interactant>
    <organismsDiffer>false</organismsDiffer>
    <experiments>3</experiments>
</comment>
<comment type="interaction">
    <interactant intactId="EBI-8451480">
        <id>O75865-2</id>
    </interactant>
    <interactant intactId="EBI-6257312">
        <id>Q9BVN2</id>
        <label>RUSC1</label>
    </interactant>
    <organismsDiffer>false</organismsDiffer>
    <experiments>3</experiments>
</comment>
<comment type="interaction">
    <interactant intactId="EBI-8451480">
        <id>O75865-2</id>
    </interactant>
    <interactant intactId="EBI-10692913">
        <id>Q9UIL1-3</id>
        <label>SCOC</label>
    </interactant>
    <organismsDiffer>false</organismsDiffer>
    <experiments>3</experiments>
</comment>
<comment type="interaction">
    <interactant intactId="EBI-8451480">
        <id>O75865-2</id>
    </interactant>
    <interactant intactId="EBI-748621">
        <id>Q9UJW9</id>
        <label>SERTAD3</label>
    </interactant>
    <organismsDiffer>false</organismsDiffer>
    <experiments>3</experiments>
</comment>
<comment type="interaction">
    <interactant intactId="EBI-8451480">
        <id>O75865-2</id>
    </interactant>
    <interactant intactId="EBI-2555428">
        <id>Q9BWJ5</id>
        <label>SF3B5</label>
    </interactant>
    <organismsDiffer>false</organismsDiffer>
    <experiments>3</experiments>
</comment>
<comment type="interaction">
    <interactant intactId="EBI-8451480">
        <id>O75865-2</id>
    </interactant>
    <interactant intactId="EBI-12275818">
        <id>Q53HV7-2</id>
        <label>SMUG1</label>
    </interactant>
    <organismsDiffer>false</organismsDiffer>
    <experiments>3</experiments>
</comment>
<comment type="interaction">
    <interactant intactId="EBI-8451480">
        <id>O75865-2</id>
    </interactant>
    <interactant intactId="EBI-529518">
        <id>Q86VP1</id>
        <label>TAX1BP1</label>
    </interactant>
    <organismsDiffer>false</organismsDiffer>
    <experiments>3</experiments>
</comment>
<comment type="interaction">
    <interactant intactId="EBI-8451480">
        <id>O75865-2</id>
    </interactant>
    <interactant intactId="EBI-11139477">
        <id>Q96N21</id>
        <label>TEPSIN</label>
    </interactant>
    <organismsDiffer>false</organismsDiffer>
    <experiments>3</experiments>
</comment>
<comment type="interaction">
    <interactant intactId="EBI-8451480">
        <id>O75865-2</id>
    </interactant>
    <interactant intactId="EBI-11119202">
        <id>Q9UL33-2</id>
        <label>TRAPPC2L</label>
    </interactant>
    <organismsDiffer>false</organismsDiffer>
    <experiments>5</experiments>
</comment>
<comment type="interaction">
    <interactant intactId="EBI-8451480">
        <id>O75865-2</id>
    </interactant>
    <interactant intactId="EBI-743566">
        <id>O43617</id>
        <label>TRAPPC3</label>
    </interactant>
    <organismsDiffer>false</organismsDiffer>
    <experiments>6</experiments>
</comment>
<comment type="interaction">
    <interactant intactId="EBI-8451480">
        <id>O75865-2</id>
    </interactant>
    <interactant intactId="EBI-17716262">
        <id>Q9UPQ4-2</id>
        <label>TRIM35</label>
    </interactant>
    <organismsDiffer>false</organismsDiffer>
    <experiments>3</experiments>
</comment>
<comment type="interaction">
    <interactant intactId="EBI-8451480">
        <id>O75865-2</id>
    </interactant>
    <interactant intactId="EBI-9090990">
        <id>Q5W5X9-3</id>
        <label>TTC23</label>
    </interactant>
    <organismsDiffer>false</organismsDiffer>
    <experiments>3</experiments>
</comment>
<comment type="interaction">
    <interactant intactId="EBI-8451480">
        <id>O75865-2</id>
    </interactant>
    <interactant intactId="EBI-2514383">
        <id>Q5T6F2</id>
        <label>UBAP2</label>
    </interactant>
    <organismsDiffer>false</organismsDiffer>
    <experiments>3</experiments>
</comment>
<comment type="interaction">
    <interactant intactId="EBI-8451480">
        <id>O75865-2</id>
    </interactant>
    <interactant intactId="EBI-11419867">
        <id>Q8TF47</id>
        <label>ZFP90</label>
    </interactant>
    <organismsDiffer>false</organismsDiffer>
    <experiments>3</experiments>
</comment>
<comment type="subcellular location">
    <subcellularLocation>
        <location evidence="1">Golgi apparatus</location>
        <location evidence="1">cis-Golgi network</location>
    </subcellularLocation>
    <subcellularLocation>
        <location evidence="1">Endoplasmic reticulum</location>
    </subcellularLocation>
</comment>
<comment type="alternative products">
    <event type="alternative splicing"/>
    <isoform>
        <id>O75865-1</id>
        <name>1</name>
        <sequence type="displayed"/>
    </isoform>
    <isoform>
        <id>O75865-2</id>
        <name>2</name>
        <sequence type="described" ref="VSP_019585"/>
    </isoform>
    <isoform>
        <id>O75865-3</id>
        <name>3</name>
        <sequence type="described" ref="VSP_047016"/>
    </isoform>
    <isoform>
        <id>O75865-4</id>
        <name>4</name>
        <sequence type="described" ref="VSP_047017"/>
    </isoform>
</comment>
<comment type="similarity">
    <text evidence="8">Belongs to the TRAPP small subunits family. BET3 subfamily.</text>
</comment>
<comment type="sequence caution" evidence="8">
    <conflict type="erroneous initiation">
        <sequence resource="EMBL-CDS" id="AAC62259"/>
    </conflict>
    <text>Extended N-terminus.</text>
</comment>
<comment type="sequence caution" evidence="8">
    <conflict type="erroneous initiation">
        <sequence resource="EMBL-CDS" id="AAF28967"/>
    </conflict>
    <text>Extended N-terminus.</text>
</comment>
<organism>
    <name type="scientific">Homo sapiens</name>
    <name type="common">Human</name>
    <dbReference type="NCBI Taxonomy" id="9606"/>
    <lineage>
        <taxon>Eukaryota</taxon>
        <taxon>Metazoa</taxon>
        <taxon>Chordata</taxon>
        <taxon>Craniata</taxon>
        <taxon>Vertebrata</taxon>
        <taxon>Euteleostomi</taxon>
        <taxon>Mammalia</taxon>
        <taxon>Eutheria</taxon>
        <taxon>Euarchontoglires</taxon>
        <taxon>Primates</taxon>
        <taxon>Haplorrhini</taxon>
        <taxon>Catarrhini</taxon>
        <taxon>Hominidae</taxon>
        <taxon>Homo</taxon>
    </lineage>
</organism>
<accession>O75865</accession>
<accession>K7ERB1</accession>
<accession>K7ERQ4</accession>
<accession>Q9BQ45</accession>
<accession>Q9P092</accession>
<keyword id="KW-0002">3D-structure</keyword>
<keyword id="KW-0025">Alternative splicing</keyword>
<keyword id="KW-0256">Endoplasmic reticulum</keyword>
<keyword id="KW-0931">ER-Golgi transport</keyword>
<keyword id="KW-0333">Golgi apparatus</keyword>
<keyword id="KW-0597">Phosphoprotein</keyword>
<keyword id="KW-1267">Proteomics identification</keyword>
<keyword id="KW-1185">Reference proteome</keyword>
<keyword id="KW-0813">Transport</keyword>
<gene>
    <name evidence="7 9" type="primary">TRAPPC6A</name>
    <name type="ORF">HSPC289</name>
</gene>
<protein>
    <recommendedName>
        <fullName evidence="7">Trafficking protein particle complex subunit 6A</fullName>
        <shortName>TRAPP complex subunit 6A</shortName>
    </recommendedName>
</protein>